<evidence type="ECO:0000255" key="1">
    <source>
        <dbReference type="HAMAP-Rule" id="MF_00421"/>
    </source>
</evidence>
<name>PURQ_BACLD</name>
<comment type="function">
    <text evidence="1">Part of the phosphoribosylformylglycinamidine synthase complex involved in the purines biosynthetic pathway. Catalyzes the ATP-dependent conversion of formylglycinamide ribonucleotide (FGAR) and glutamine to yield formylglycinamidine ribonucleotide (FGAM) and glutamate. The FGAM synthase complex is composed of three subunits. PurQ produces an ammonia molecule by converting glutamine to glutamate. PurL transfers the ammonia molecule to FGAR to form FGAM in an ATP-dependent manner. PurS interacts with PurQ and PurL and is thought to assist in the transfer of the ammonia molecule from PurQ to PurL.</text>
</comment>
<comment type="catalytic activity">
    <reaction evidence="1">
        <text>N(2)-formyl-N(1)-(5-phospho-beta-D-ribosyl)glycinamide + L-glutamine + ATP + H2O = 2-formamido-N(1)-(5-O-phospho-beta-D-ribosyl)acetamidine + L-glutamate + ADP + phosphate + H(+)</text>
        <dbReference type="Rhea" id="RHEA:17129"/>
        <dbReference type="ChEBI" id="CHEBI:15377"/>
        <dbReference type="ChEBI" id="CHEBI:15378"/>
        <dbReference type="ChEBI" id="CHEBI:29985"/>
        <dbReference type="ChEBI" id="CHEBI:30616"/>
        <dbReference type="ChEBI" id="CHEBI:43474"/>
        <dbReference type="ChEBI" id="CHEBI:58359"/>
        <dbReference type="ChEBI" id="CHEBI:147286"/>
        <dbReference type="ChEBI" id="CHEBI:147287"/>
        <dbReference type="ChEBI" id="CHEBI:456216"/>
        <dbReference type="EC" id="6.3.5.3"/>
    </reaction>
</comment>
<comment type="catalytic activity">
    <reaction evidence="1">
        <text>L-glutamine + H2O = L-glutamate + NH4(+)</text>
        <dbReference type="Rhea" id="RHEA:15889"/>
        <dbReference type="ChEBI" id="CHEBI:15377"/>
        <dbReference type="ChEBI" id="CHEBI:28938"/>
        <dbReference type="ChEBI" id="CHEBI:29985"/>
        <dbReference type="ChEBI" id="CHEBI:58359"/>
        <dbReference type="EC" id="3.5.1.2"/>
    </reaction>
</comment>
<comment type="pathway">
    <text evidence="1">Purine metabolism; IMP biosynthesis via de novo pathway; 5-amino-1-(5-phospho-D-ribosyl)imidazole from N(2)-formyl-N(1)-(5-phospho-D-ribosyl)glycinamide: step 1/2.</text>
</comment>
<comment type="subunit">
    <text evidence="1">Part of the FGAM synthase complex composed of 1 PurL, 1 PurQ and 2 PurS subunits.</text>
</comment>
<comment type="subcellular location">
    <subcellularLocation>
        <location evidence="1">Cytoplasm</location>
    </subcellularLocation>
</comment>
<accession>Q65MS9</accession>
<accession>Q62Y74</accession>
<feature type="chain" id="PRO_0000100537" description="Phosphoribosylformylglycinamidine synthase subunit PurQ">
    <location>
        <begin position="1"/>
        <end position="227"/>
    </location>
</feature>
<feature type="domain" description="Glutamine amidotransferase type-1" evidence="1">
    <location>
        <begin position="3"/>
        <end position="225"/>
    </location>
</feature>
<feature type="active site" description="Nucleophile" evidence="1">
    <location>
        <position position="86"/>
    </location>
</feature>
<feature type="active site" evidence="1">
    <location>
        <position position="194"/>
    </location>
</feature>
<feature type="active site" evidence="1">
    <location>
        <position position="196"/>
    </location>
</feature>
<keyword id="KW-0067">ATP-binding</keyword>
<keyword id="KW-0963">Cytoplasm</keyword>
<keyword id="KW-0315">Glutamine amidotransferase</keyword>
<keyword id="KW-0378">Hydrolase</keyword>
<keyword id="KW-0436">Ligase</keyword>
<keyword id="KW-0547">Nucleotide-binding</keyword>
<keyword id="KW-0658">Purine biosynthesis</keyword>
<keyword id="KW-1185">Reference proteome</keyword>
<reference key="1">
    <citation type="journal article" date="2004" name="J. Mol. Microbiol. Biotechnol.">
        <title>The complete genome sequence of Bacillus licheniformis DSM13, an organism with great industrial potential.</title>
        <authorList>
            <person name="Veith B."/>
            <person name="Herzberg C."/>
            <person name="Steckel S."/>
            <person name="Feesche J."/>
            <person name="Maurer K.H."/>
            <person name="Ehrenreich P."/>
            <person name="Baeumer S."/>
            <person name="Henne A."/>
            <person name="Liesegang H."/>
            <person name="Merkl R."/>
            <person name="Ehrenreich A."/>
            <person name="Gottschalk G."/>
        </authorList>
    </citation>
    <scope>NUCLEOTIDE SEQUENCE [LARGE SCALE GENOMIC DNA]</scope>
    <source>
        <strain>ATCC 14580 / DSM 13 / JCM 2505 / CCUG 7422 / NBRC 12200 / NCIMB 9375 / NCTC 10341 / NRRL NRS-1264 / Gibson 46</strain>
    </source>
</reference>
<reference key="2">
    <citation type="journal article" date="2004" name="Genome Biol.">
        <title>Complete genome sequence of the industrial bacterium Bacillus licheniformis and comparisons with closely related Bacillus species.</title>
        <authorList>
            <person name="Rey M.W."/>
            <person name="Ramaiya P."/>
            <person name="Nelson B.A."/>
            <person name="Brody-Karpin S.D."/>
            <person name="Zaretsky E.J."/>
            <person name="Tang M."/>
            <person name="Lopez de Leon A."/>
            <person name="Xiang H."/>
            <person name="Gusti V."/>
            <person name="Clausen I.G."/>
            <person name="Olsen P.B."/>
            <person name="Rasmussen M.D."/>
            <person name="Andersen J.T."/>
            <person name="Joergensen P.L."/>
            <person name="Larsen T.S."/>
            <person name="Sorokin A."/>
            <person name="Bolotin A."/>
            <person name="Lapidus A."/>
            <person name="Galleron N."/>
            <person name="Ehrlich S.D."/>
            <person name="Berka R.M."/>
        </authorList>
    </citation>
    <scope>NUCLEOTIDE SEQUENCE [LARGE SCALE GENOMIC DNA]</scope>
    <source>
        <strain>ATCC 14580 / DSM 13 / JCM 2505 / CCUG 7422 / NBRC 12200 / NCIMB 9375 / NCTC 10341 / NRRL NRS-1264 / Gibson 46</strain>
    </source>
</reference>
<organism>
    <name type="scientific">Bacillus licheniformis (strain ATCC 14580 / DSM 13 / JCM 2505 / CCUG 7422 / NBRC 12200 / NCIMB 9375 / NCTC 10341 / NRRL NRS-1264 / Gibson 46)</name>
    <dbReference type="NCBI Taxonomy" id="279010"/>
    <lineage>
        <taxon>Bacteria</taxon>
        <taxon>Bacillati</taxon>
        <taxon>Bacillota</taxon>
        <taxon>Bacilli</taxon>
        <taxon>Bacillales</taxon>
        <taxon>Bacillaceae</taxon>
        <taxon>Bacillus</taxon>
    </lineage>
</organism>
<sequence>MKFAVIVLPGSNCDIDMFHAIKDELGEEAEYVWHTETSLDEYDGVLIPGGFSYGDYLRCGAIARFANIMPAVKKAAEEGKPVLGVCNGFQILQELGLLPGAMRRNKDLKFICRPVELIVQNNETLFTSSYGKGESITIPVAHGEGNFYCDEETLAGLQENNQIAFTYGTDINGSVADIAGVVNEKGNVLGMMPHPERAVDSLLGSADGLKLFQSIVKNWRETHVATA</sequence>
<protein>
    <recommendedName>
        <fullName evidence="1">Phosphoribosylformylglycinamidine synthase subunit PurQ</fullName>
        <shortName evidence="1">FGAM synthase</shortName>
        <ecNumber evidence="1">6.3.5.3</ecNumber>
    </recommendedName>
    <alternativeName>
        <fullName evidence="1">Formylglycinamide ribonucleotide amidotransferase subunit I</fullName>
        <shortName evidence="1">FGAR amidotransferase I</shortName>
        <shortName evidence="1">FGAR-AT I</shortName>
    </alternativeName>
    <alternativeName>
        <fullName evidence="1">Glutaminase PurQ</fullName>
        <ecNumber evidence="1">3.5.1.2</ecNumber>
    </alternativeName>
    <alternativeName>
        <fullName evidence="1">Phosphoribosylformylglycinamidine synthase subunit I</fullName>
    </alternativeName>
</protein>
<proteinExistence type="inferred from homology"/>
<gene>
    <name evidence="1" type="primary">purQ</name>
    <name type="ordered locus">BLi00698</name>
    <name type="ordered locus">BL01481</name>
</gene>
<dbReference type="EC" id="6.3.5.3" evidence="1"/>
<dbReference type="EC" id="3.5.1.2" evidence="1"/>
<dbReference type="EMBL" id="AE017333">
    <property type="protein sequence ID" value="AAU39635.1"/>
    <property type="molecule type" value="Genomic_DNA"/>
</dbReference>
<dbReference type="EMBL" id="CP000002">
    <property type="protein sequence ID" value="AAU22284.1"/>
    <property type="molecule type" value="Genomic_DNA"/>
</dbReference>
<dbReference type="RefSeq" id="WP_003179533.1">
    <property type="nucleotide sequence ID" value="NC_006322.1"/>
</dbReference>
<dbReference type="SMR" id="Q65MS9"/>
<dbReference type="STRING" id="279010.BL01481"/>
<dbReference type="GeneID" id="92862721"/>
<dbReference type="KEGG" id="bld:BLi00698"/>
<dbReference type="KEGG" id="bli:BL01481"/>
<dbReference type="eggNOG" id="COG0047">
    <property type="taxonomic scope" value="Bacteria"/>
</dbReference>
<dbReference type="HOGENOM" id="CLU_001031_3_1_9"/>
<dbReference type="UniPathway" id="UPA00074">
    <property type="reaction ID" value="UER00128"/>
</dbReference>
<dbReference type="Proteomes" id="UP000000606">
    <property type="component" value="Chromosome"/>
</dbReference>
<dbReference type="Bgee" id="BL01481">
    <property type="expression patterns" value="Expressed in egg cell and 11 other cell types or tissues"/>
</dbReference>
<dbReference type="GO" id="GO:0005737">
    <property type="term" value="C:cytoplasm"/>
    <property type="evidence" value="ECO:0007669"/>
    <property type="project" value="UniProtKB-SubCell"/>
</dbReference>
<dbReference type="GO" id="GO:0005524">
    <property type="term" value="F:ATP binding"/>
    <property type="evidence" value="ECO:0007669"/>
    <property type="project" value="UniProtKB-KW"/>
</dbReference>
<dbReference type="GO" id="GO:0004359">
    <property type="term" value="F:glutaminase activity"/>
    <property type="evidence" value="ECO:0007669"/>
    <property type="project" value="UniProtKB-EC"/>
</dbReference>
<dbReference type="GO" id="GO:0004642">
    <property type="term" value="F:phosphoribosylformylglycinamidine synthase activity"/>
    <property type="evidence" value="ECO:0007669"/>
    <property type="project" value="UniProtKB-UniRule"/>
</dbReference>
<dbReference type="GO" id="GO:0006189">
    <property type="term" value="P:'de novo' IMP biosynthetic process"/>
    <property type="evidence" value="ECO:0007669"/>
    <property type="project" value="UniProtKB-UniRule"/>
</dbReference>
<dbReference type="CDD" id="cd01740">
    <property type="entry name" value="GATase1_FGAR_AT"/>
    <property type="match status" value="1"/>
</dbReference>
<dbReference type="FunFam" id="3.40.50.880:FF:000019">
    <property type="entry name" value="Phosphoribosylformylglycinamidine synthase subunit PurQ"/>
    <property type="match status" value="1"/>
</dbReference>
<dbReference type="Gene3D" id="3.40.50.880">
    <property type="match status" value="1"/>
</dbReference>
<dbReference type="HAMAP" id="MF_00421">
    <property type="entry name" value="PurQ"/>
    <property type="match status" value="1"/>
</dbReference>
<dbReference type="InterPro" id="IPR029062">
    <property type="entry name" value="Class_I_gatase-like"/>
</dbReference>
<dbReference type="InterPro" id="IPR010075">
    <property type="entry name" value="PRibForGlyAmidine_synth_PurQ"/>
</dbReference>
<dbReference type="NCBIfam" id="TIGR01737">
    <property type="entry name" value="FGAM_synth_I"/>
    <property type="match status" value="1"/>
</dbReference>
<dbReference type="NCBIfam" id="NF002957">
    <property type="entry name" value="PRK03619.1"/>
    <property type="match status" value="1"/>
</dbReference>
<dbReference type="PANTHER" id="PTHR47552">
    <property type="entry name" value="PHOSPHORIBOSYLFORMYLGLYCINAMIDINE SYNTHASE SUBUNIT PURQ"/>
    <property type="match status" value="1"/>
</dbReference>
<dbReference type="PANTHER" id="PTHR47552:SF1">
    <property type="entry name" value="PHOSPHORIBOSYLFORMYLGLYCINAMIDINE SYNTHASE SUBUNIT PURQ"/>
    <property type="match status" value="1"/>
</dbReference>
<dbReference type="Pfam" id="PF13507">
    <property type="entry name" value="GATase_5"/>
    <property type="match status" value="1"/>
</dbReference>
<dbReference type="PIRSF" id="PIRSF001586">
    <property type="entry name" value="FGAM_synth_I"/>
    <property type="match status" value="1"/>
</dbReference>
<dbReference type="SMART" id="SM01211">
    <property type="entry name" value="GATase_5"/>
    <property type="match status" value="1"/>
</dbReference>
<dbReference type="SUPFAM" id="SSF52317">
    <property type="entry name" value="Class I glutamine amidotransferase-like"/>
    <property type="match status" value="1"/>
</dbReference>
<dbReference type="PROSITE" id="PS51273">
    <property type="entry name" value="GATASE_TYPE_1"/>
    <property type="match status" value="1"/>
</dbReference>